<feature type="chain" id="PRO_0000280884" description="Probable cytochrome c oxidase subunit 1">
    <location>
        <begin position="1"/>
        <end position="532"/>
    </location>
</feature>
<feature type="transmembrane region" description="Helical" evidence="2">
    <location>
        <begin position="33"/>
        <end position="53"/>
    </location>
</feature>
<feature type="transmembrane region" description="Helical" evidence="2">
    <location>
        <begin position="74"/>
        <end position="94"/>
    </location>
</feature>
<feature type="transmembrane region" description="Helical" evidence="2">
    <location>
        <begin position="95"/>
        <end position="115"/>
    </location>
</feature>
<feature type="transmembrane region" description="Helical" evidence="2">
    <location>
        <begin position="118"/>
        <end position="138"/>
    </location>
</feature>
<feature type="transmembrane region" description="Helical" evidence="2">
    <location>
        <begin position="163"/>
        <end position="183"/>
    </location>
</feature>
<feature type="transmembrane region" description="Helical" evidence="2">
    <location>
        <begin position="200"/>
        <end position="220"/>
    </location>
</feature>
<feature type="transmembrane region" description="Helical" evidence="2">
    <location>
        <begin position="252"/>
        <end position="272"/>
    </location>
</feature>
<feature type="transmembrane region" description="Helical" evidence="2">
    <location>
        <begin position="284"/>
        <end position="304"/>
    </location>
</feature>
<feature type="transmembrane region" description="Helical" evidence="2">
    <location>
        <begin position="318"/>
        <end position="338"/>
    </location>
</feature>
<feature type="transmembrane region" description="Helical" evidence="2">
    <location>
        <begin position="355"/>
        <end position="375"/>
    </location>
</feature>
<feature type="transmembrane region" description="Helical" evidence="2">
    <location>
        <begin position="394"/>
        <end position="414"/>
    </location>
</feature>
<feature type="transmembrane region" description="Helical" evidence="2">
    <location>
        <begin position="431"/>
        <end position="451"/>
    </location>
</feature>
<feature type="transmembrane region" description="Helical" evidence="2">
    <location>
        <begin position="473"/>
        <end position="493"/>
    </location>
</feature>
<feature type="binding site" description="axial binding residue" evidence="1">
    <location>
        <position position="79"/>
    </location>
    <ligand>
        <name>Fe(II)-heme a</name>
        <dbReference type="ChEBI" id="CHEBI:61715"/>
    </ligand>
    <ligandPart>
        <name>Fe</name>
        <dbReference type="ChEBI" id="CHEBI:18248"/>
    </ligandPart>
</feature>
<feature type="binding site" evidence="1">
    <location>
        <position position="258"/>
    </location>
    <ligand>
        <name>Cu cation</name>
        <dbReference type="ChEBI" id="CHEBI:23378"/>
        <label>B</label>
    </ligand>
</feature>
<feature type="binding site" evidence="1">
    <location>
        <position position="262"/>
    </location>
    <ligand>
        <name>Cu cation</name>
        <dbReference type="ChEBI" id="CHEBI:23378"/>
        <label>B</label>
    </ligand>
</feature>
<feature type="binding site" evidence="1">
    <location>
        <position position="307"/>
    </location>
    <ligand>
        <name>Cu cation</name>
        <dbReference type="ChEBI" id="CHEBI:23378"/>
        <label>B</label>
    </ligand>
</feature>
<feature type="binding site" evidence="1">
    <location>
        <position position="308"/>
    </location>
    <ligand>
        <name>Cu cation</name>
        <dbReference type="ChEBI" id="CHEBI:23378"/>
        <label>B</label>
    </ligand>
</feature>
<feature type="binding site" description="axial binding residue" evidence="1">
    <location>
        <position position="393"/>
    </location>
    <ligand>
        <name>heme a3</name>
        <dbReference type="ChEBI" id="CHEBI:83282"/>
    </ligand>
    <ligandPart>
        <name>Fe</name>
        <dbReference type="ChEBI" id="CHEBI:18248"/>
    </ligandPart>
</feature>
<feature type="binding site" description="axial binding residue" evidence="1">
    <location>
        <position position="395"/>
    </location>
    <ligand>
        <name>Fe(II)-heme a</name>
        <dbReference type="ChEBI" id="CHEBI:61715"/>
    </ligand>
    <ligandPart>
        <name>Fe</name>
        <dbReference type="ChEBI" id="CHEBI:18248"/>
    </ligandPart>
</feature>
<gene>
    <name type="primary">ctaD</name>
    <name type="synonym">coxA</name>
    <name type="ordered locus">RBE_0891</name>
</gene>
<keyword id="KW-1003">Cell membrane</keyword>
<keyword id="KW-0186">Copper</keyword>
<keyword id="KW-0249">Electron transport</keyword>
<keyword id="KW-0349">Heme</keyword>
<keyword id="KW-0408">Iron</keyword>
<keyword id="KW-0472">Membrane</keyword>
<keyword id="KW-0479">Metal-binding</keyword>
<keyword id="KW-0679">Respiratory chain</keyword>
<keyword id="KW-1278">Translocase</keyword>
<keyword id="KW-0812">Transmembrane</keyword>
<keyword id="KW-1133">Transmembrane helix</keyword>
<keyword id="KW-0813">Transport</keyword>
<comment type="function">
    <text evidence="1">Cytochrome c oxidase is the component of the respiratory chain that catalyzes the reduction of oxygen to water. Subunits 1-3 form the functional core of the enzyme complex. CO I is the catalytic subunit of the enzyme. Electrons originating in cytochrome c are transferred via the copper A center of subunit 2 and heme A of subunit 1 to the bimetallic center formed by heme A3 and copper B (By similarity).</text>
</comment>
<comment type="catalytic activity">
    <reaction>
        <text>4 Fe(II)-[cytochrome c] + O2 + 8 H(+)(in) = 4 Fe(III)-[cytochrome c] + 2 H2O + 4 H(+)(out)</text>
        <dbReference type="Rhea" id="RHEA:11436"/>
        <dbReference type="Rhea" id="RHEA-COMP:10350"/>
        <dbReference type="Rhea" id="RHEA-COMP:14399"/>
        <dbReference type="ChEBI" id="CHEBI:15377"/>
        <dbReference type="ChEBI" id="CHEBI:15378"/>
        <dbReference type="ChEBI" id="CHEBI:15379"/>
        <dbReference type="ChEBI" id="CHEBI:29033"/>
        <dbReference type="ChEBI" id="CHEBI:29034"/>
        <dbReference type="EC" id="7.1.1.9"/>
    </reaction>
</comment>
<comment type="pathway">
    <text>Energy metabolism; oxidative phosphorylation.</text>
</comment>
<comment type="subcellular location">
    <subcellularLocation>
        <location>Cell membrane</location>
        <topology>Multi-pass membrane protein</topology>
    </subcellularLocation>
</comment>
<comment type="similarity">
    <text evidence="3">Belongs to the heme-copper respiratory oxidase family.</text>
</comment>
<name>COX1_RICBR</name>
<protein>
    <recommendedName>
        <fullName>Probable cytochrome c oxidase subunit 1</fullName>
        <ecNumber>7.1.1.9</ecNumber>
    </recommendedName>
    <alternativeName>
        <fullName>Cytochrome aa3 subunit 1</fullName>
    </alternativeName>
    <alternativeName>
        <fullName>Cytochrome c oxidase polypeptide I</fullName>
    </alternativeName>
</protein>
<evidence type="ECO:0000250" key="1"/>
<evidence type="ECO:0000255" key="2"/>
<evidence type="ECO:0000305" key="3"/>
<organism>
    <name type="scientific">Rickettsia bellii (strain RML369-C)</name>
    <dbReference type="NCBI Taxonomy" id="336407"/>
    <lineage>
        <taxon>Bacteria</taxon>
        <taxon>Pseudomonadati</taxon>
        <taxon>Pseudomonadota</taxon>
        <taxon>Alphaproteobacteria</taxon>
        <taxon>Rickettsiales</taxon>
        <taxon>Rickettsiaceae</taxon>
        <taxon>Rickettsieae</taxon>
        <taxon>Rickettsia</taxon>
        <taxon>belli group</taxon>
    </lineage>
</organism>
<dbReference type="EC" id="7.1.1.9"/>
<dbReference type="EMBL" id="CP000087">
    <property type="protein sequence ID" value="ABE04972.1"/>
    <property type="molecule type" value="Genomic_DNA"/>
</dbReference>
<dbReference type="RefSeq" id="WP_011477557.1">
    <property type="nucleotide sequence ID" value="NC_007940.1"/>
</dbReference>
<dbReference type="SMR" id="Q1RI42"/>
<dbReference type="KEGG" id="rbe:RBE_0891"/>
<dbReference type="eggNOG" id="COG0843">
    <property type="taxonomic scope" value="Bacteria"/>
</dbReference>
<dbReference type="HOGENOM" id="CLU_011899_7_3_5"/>
<dbReference type="OrthoDB" id="9803294at2"/>
<dbReference type="UniPathway" id="UPA00705"/>
<dbReference type="Proteomes" id="UP000001951">
    <property type="component" value="Chromosome"/>
</dbReference>
<dbReference type="GO" id="GO:0005886">
    <property type="term" value="C:plasma membrane"/>
    <property type="evidence" value="ECO:0007669"/>
    <property type="project" value="UniProtKB-SubCell"/>
</dbReference>
<dbReference type="GO" id="GO:0045277">
    <property type="term" value="C:respiratory chain complex IV"/>
    <property type="evidence" value="ECO:0007669"/>
    <property type="project" value="InterPro"/>
</dbReference>
<dbReference type="GO" id="GO:0004129">
    <property type="term" value="F:cytochrome-c oxidase activity"/>
    <property type="evidence" value="ECO:0007669"/>
    <property type="project" value="UniProtKB-EC"/>
</dbReference>
<dbReference type="GO" id="GO:0020037">
    <property type="term" value="F:heme binding"/>
    <property type="evidence" value="ECO:0007669"/>
    <property type="project" value="InterPro"/>
</dbReference>
<dbReference type="GO" id="GO:0046872">
    <property type="term" value="F:metal ion binding"/>
    <property type="evidence" value="ECO:0007669"/>
    <property type="project" value="UniProtKB-KW"/>
</dbReference>
<dbReference type="GO" id="GO:0015990">
    <property type="term" value="P:electron transport coupled proton transport"/>
    <property type="evidence" value="ECO:0007669"/>
    <property type="project" value="InterPro"/>
</dbReference>
<dbReference type="GO" id="GO:0006119">
    <property type="term" value="P:oxidative phosphorylation"/>
    <property type="evidence" value="ECO:0007669"/>
    <property type="project" value="UniProtKB-UniPathway"/>
</dbReference>
<dbReference type="GO" id="GO:0022904">
    <property type="term" value="P:respiratory electron transport chain"/>
    <property type="evidence" value="ECO:0007669"/>
    <property type="project" value="TreeGrafter"/>
</dbReference>
<dbReference type="CDD" id="cd01663">
    <property type="entry name" value="Cyt_c_Oxidase_I"/>
    <property type="match status" value="1"/>
</dbReference>
<dbReference type="FunFam" id="1.20.210.10:FF:000004">
    <property type="entry name" value="Cytochrome c oxidase subunit 1"/>
    <property type="match status" value="1"/>
</dbReference>
<dbReference type="Gene3D" id="1.20.210.10">
    <property type="entry name" value="Cytochrome c oxidase-like, subunit I domain"/>
    <property type="match status" value="1"/>
</dbReference>
<dbReference type="InterPro" id="IPR023616">
    <property type="entry name" value="Cyt_c_oxase-like_su1_dom"/>
</dbReference>
<dbReference type="InterPro" id="IPR036927">
    <property type="entry name" value="Cyt_c_oxase-like_su1_sf"/>
</dbReference>
<dbReference type="InterPro" id="IPR000883">
    <property type="entry name" value="Cyt_C_Oxase_1"/>
</dbReference>
<dbReference type="InterPro" id="IPR023615">
    <property type="entry name" value="Cyt_c_Oxase_su1_BS"/>
</dbReference>
<dbReference type="InterPro" id="IPR033944">
    <property type="entry name" value="Cyt_c_oxase_su1_dom"/>
</dbReference>
<dbReference type="InterPro" id="IPR014241">
    <property type="entry name" value="Cyt_c_oxidase_su1_bac"/>
</dbReference>
<dbReference type="NCBIfam" id="TIGR02891">
    <property type="entry name" value="CtaD_CoxA"/>
    <property type="match status" value="1"/>
</dbReference>
<dbReference type="PANTHER" id="PTHR10422">
    <property type="entry name" value="CYTOCHROME C OXIDASE SUBUNIT 1"/>
    <property type="match status" value="1"/>
</dbReference>
<dbReference type="PANTHER" id="PTHR10422:SF18">
    <property type="entry name" value="CYTOCHROME C OXIDASE SUBUNIT 1"/>
    <property type="match status" value="1"/>
</dbReference>
<dbReference type="Pfam" id="PF00115">
    <property type="entry name" value="COX1"/>
    <property type="match status" value="1"/>
</dbReference>
<dbReference type="PRINTS" id="PR01165">
    <property type="entry name" value="CYCOXIDASEI"/>
</dbReference>
<dbReference type="SUPFAM" id="SSF81442">
    <property type="entry name" value="Cytochrome c oxidase subunit I-like"/>
    <property type="match status" value="1"/>
</dbReference>
<dbReference type="PROSITE" id="PS50855">
    <property type="entry name" value="COX1"/>
    <property type="match status" value="1"/>
</dbReference>
<dbReference type="PROSITE" id="PS00077">
    <property type="entry name" value="COX1_CUB"/>
    <property type="match status" value="1"/>
</dbReference>
<reference key="1">
    <citation type="journal article" date="2006" name="PLoS Genet.">
        <title>Genome sequence of Rickettsia bellii illuminates the role of amoebae in gene exchanges between intracellular pathogens.</title>
        <authorList>
            <person name="Ogata H."/>
            <person name="La Scola B."/>
            <person name="Audic S."/>
            <person name="Renesto P."/>
            <person name="Blanc G."/>
            <person name="Robert C."/>
            <person name="Fournier P.-E."/>
            <person name="Claverie J.-M."/>
            <person name="Raoult D."/>
        </authorList>
    </citation>
    <scope>NUCLEOTIDE SEQUENCE [LARGE SCALE GENOMIC DNA]</scope>
    <source>
        <strain>RML369-C</strain>
    </source>
</reference>
<accession>Q1RI42</accession>
<proteinExistence type="inferred from homology"/>
<sequence>MDITTNDLNHDDHHTPHGWKRWLFSTNHKDIGIMYIIFAIFAGIVGGLFSLLFRLELAMPGGTFLNHDFQLYNVLITAHAVIMVFFMIMPALFGGFGNYFVPLLIGAPDMAFPRLNNISFWLLVPAFILLMGSAFVDGGPGTGWTLYPPLSSISGHPGAAVDMAIFSLHLTGLSSILGSINLIVTIFNMRAPGMGLFKMPLFVWSILVTAFLIILAMPVLGGAITMLLTDRNFGTTFFKTDGGGDPVLFQHLFWFFGHPEVYIVILPGFGIVSQVISTFSRKPIFGYQGMVGAMVIIGFVGFIVWAHHMFTVGLSYNALIYFTAGTMIIAIPTGIKIFSWIATMWGGSITFPTPMLFSIGFIILFTIGGVTGIILSNSALDRVLHDTYYVVAHFHYTMSLGALFTAFAGFYYWFGKISGKQYPEILGKIHFWITFVGVNLTFFPQHFLGLAGMPRRIPDYPEAFAGWNMVSSIGAGISMAAALYFVFIVFYTLKYGKDCPNNPWGDGADTLEWTLTSPPPFHTFETPPHIEE</sequence>